<keyword id="KW-0067">ATP-binding</keyword>
<keyword id="KW-0347">Helicase</keyword>
<keyword id="KW-0378">Hydrolase</keyword>
<keyword id="KW-0547">Nucleotide-binding</keyword>
<keyword id="KW-1185">Reference proteome</keyword>
<keyword id="KW-0694">RNA-binding</keyword>
<keyword id="KW-0804">Transcription</keyword>
<keyword id="KW-0805">Transcription regulation</keyword>
<keyword id="KW-0806">Transcription termination</keyword>
<name>RHO1_EHRCR</name>
<organism>
    <name type="scientific">Ehrlichia chaffeensis (strain ATCC CRL-10679 / Arkansas)</name>
    <dbReference type="NCBI Taxonomy" id="205920"/>
    <lineage>
        <taxon>Bacteria</taxon>
        <taxon>Pseudomonadati</taxon>
        <taxon>Pseudomonadota</taxon>
        <taxon>Alphaproteobacteria</taxon>
        <taxon>Rickettsiales</taxon>
        <taxon>Anaplasmataceae</taxon>
        <taxon>Ehrlichia</taxon>
    </lineage>
</organism>
<dbReference type="EC" id="3.6.4.-" evidence="1"/>
<dbReference type="EMBL" id="CP000236">
    <property type="protein sequence ID" value="ABD45313.1"/>
    <property type="molecule type" value="Genomic_DNA"/>
</dbReference>
<dbReference type="SMR" id="P0CH92"/>
<dbReference type="STRING" id="205920.ECH_0200"/>
<dbReference type="KEGG" id="ech:ECH_0994"/>
<dbReference type="eggNOG" id="COG1158">
    <property type="taxonomic scope" value="Bacteria"/>
</dbReference>
<dbReference type="HOGENOM" id="CLU_016377_4_3_5"/>
<dbReference type="Proteomes" id="UP000008320">
    <property type="component" value="Chromosome"/>
</dbReference>
<dbReference type="GO" id="GO:0005829">
    <property type="term" value="C:cytosol"/>
    <property type="evidence" value="ECO:0007669"/>
    <property type="project" value="UniProtKB-ARBA"/>
</dbReference>
<dbReference type="GO" id="GO:0005524">
    <property type="term" value="F:ATP binding"/>
    <property type="evidence" value="ECO:0007669"/>
    <property type="project" value="UniProtKB-UniRule"/>
</dbReference>
<dbReference type="GO" id="GO:0016887">
    <property type="term" value="F:ATP hydrolysis activity"/>
    <property type="evidence" value="ECO:0007669"/>
    <property type="project" value="InterPro"/>
</dbReference>
<dbReference type="GO" id="GO:0008186">
    <property type="term" value="F:ATP-dependent activity, acting on RNA"/>
    <property type="evidence" value="ECO:0007669"/>
    <property type="project" value="InterPro"/>
</dbReference>
<dbReference type="GO" id="GO:0004386">
    <property type="term" value="F:helicase activity"/>
    <property type="evidence" value="ECO:0007669"/>
    <property type="project" value="UniProtKB-UniRule"/>
</dbReference>
<dbReference type="GO" id="GO:0003723">
    <property type="term" value="F:RNA binding"/>
    <property type="evidence" value="ECO:0007669"/>
    <property type="project" value="UniProtKB-UniRule"/>
</dbReference>
<dbReference type="GO" id="GO:0006353">
    <property type="term" value="P:DNA-templated transcription termination"/>
    <property type="evidence" value="ECO:0007669"/>
    <property type="project" value="UniProtKB-UniRule"/>
</dbReference>
<dbReference type="CDD" id="cd04459">
    <property type="entry name" value="Rho_CSD"/>
    <property type="match status" value="1"/>
</dbReference>
<dbReference type="CDD" id="cd01128">
    <property type="entry name" value="rho_factor_C"/>
    <property type="match status" value="1"/>
</dbReference>
<dbReference type="Gene3D" id="1.10.720.10">
    <property type="match status" value="1"/>
</dbReference>
<dbReference type="Gene3D" id="2.40.50.140">
    <property type="entry name" value="Nucleic acid-binding proteins"/>
    <property type="match status" value="1"/>
</dbReference>
<dbReference type="Gene3D" id="3.40.50.300">
    <property type="entry name" value="P-loop containing nucleotide triphosphate hydrolases"/>
    <property type="match status" value="1"/>
</dbReference>
<dbReference type="HAMAP" id="MF_01884">
    <property type="entry name" value="Rho"/>
    <property type="match status" value="1"/>
</dbReference>
<dbReference type="InterPro" id="IPR003593">
    <property type="entry name" value="AAA+_ATPase"/>
</dbReference>
<dbReference type="InterPro" id="IPR000194">
    <property type="entry name" value="ATPase_F1/V1/A1_a/bsu_nucl-bd"/>
</dbReference>
<dbReference type="InterPro" id="IPR011129">
    <property type="entry name" value="CSD"/>
</dbReference>
<dbReference type="InterPro" id="IPR012340">
    <property type="entry name" value="NA-bd_OB-fold"/>
</dbReference>
<dbReference type="InterPro" id="IPR027417">
    <property type="entry name" value="P-loop_NTPase"/>
</dbReference>
<dbReference type="InterPro" id="IPR011112">
    <property type="entry name" value="Rho-like_N"/>
</dbReference>
<dbReference type="InterPro" id="IPR041703">
    <property type="entry name" value="Rho_factor_ATP-bd"/>
</dbReference>
<dbReference type="InterPro" id="IPR036269">
    <property type="entry name" value="Rho_N_sf"/>
</dbReference>
<dbReference type="InterPro" id="IPR011113">
    <property type="entry name" value="Rho_RNA-bd"/>
</dbReference>
<dbReference type="InterPro" id="IPR004665">
    <property type="entry name" value="Term_rho"/>
</dbReference>
<dbReference type="NCBIfam" id="NF006886">
    <property type="entry name" value="PRK09376.1"/>
    <property type="match status" value="1"/>
</dbReference>
<dbReference type="NCBIfam" id="TIGR00767">
    <property type="entry name" value="rho"/>
    <property type="match status" value="1"/>
</dbReference>
<dbReference type="PANTHER" id="PTHR46425">
    <property type="entry name" value="TRANSCRIPTION TERMINATION FACTOR RHO"/>
    <property type="match status" value="1"/>
</dbReference>
<dbReference type="PANTHER" id="PTHR46425:SF1">
    <property type="entry name" value="TRANSCRIPTION TERMINATION FACTOR RHO"/>
    <property type="match status" value="1"/>
</dbReference>
<dbReference type="Pfam" id="PF00006">
    <property type="entry name" value="ATP-synt_ab"/>
    <property type="match status" value="1"/>
</dbReference>
<dbReference type="Pfam" id="PF07498">
    <property type="entry name" value="Rho_N"/>
    <property type="match status" value="1"/>
</dbReference>
<dbReference type="Pfam" id="PF07497">
    <property type="entry name" value="Rho_RNA_bind"/>
    <property type="match status" value="1"/>
</dbReference>
<dbReference type="SMART" id="SM00382">
    <property type="entry name" value="AAA"/>
    <property type="match status" value="1"/>
</dbReference>
<dbReference type="SMART" id="SM00357">
    <property type="entry name" value="CSP"/>
    <property type="match status" value="1"/>
</dbReference>
<dbReference type="SMART" id="SM00959">
    <property type="entry name" value="Rho_N"/>
    <property type="match status" value="1"/>
</dbReference>
<dbReference type="SUPFAM" id="SSF50249">
    <property type="entry name" value="Nucleic acid-binding proteins"/>
    <property type="match status" value="1"/>
</dbReference>
<dbReference type="SUPFAM" id="SSF52540">
    <property type="entry name" value="P-loop containing nucleoside triphosphate hydrolases"/>
    <property type="match status" value="1"/>
</dbReference>
<dbReference type="SUPFAM" id="SSF68912">
    <property type="entry name" value="Rho N-terminal domain-like"/>
    <property type="match status" value="1"/>
</dbReference>
<dbReference type="PROSITE" id="PS51856">
    <property type="entry name" value="RHO_RNA_BD"/>
    <property type="match status" value="1"/>
</dbReference>
<accession>P0CH92</accession>
<accession>Q2GFK2</accession>
<sequence length="422" mass="46864">MLDLSELKKKTIEDLLKIAEDLGVVSNGRMLKQEIIFHLMKKVVSDGGAAIGGGVVEILSDGFGFLRSPEANYAASGDDVYISAGQIKKFNLRTGDIVSGEIRAPSEKERYFTLVKAHSINFTDMAKLQRYVHFDDLIPLYPEERILLECNDPISVSKKDISMRVIDIVAPLGKGQRALIVAPPRAGKTIILQQIAHSISVNHPDIELIVLLIGERPEEVTDMCRSVKGEVVSSTFDEPGYRHVQLAEIVIEKAKRMVEHKKNVVILLDSITRLARAYNSVIPSSGKVLTGGVDSNALQRPKRFFGAARNIENGGSLTIIATALIETGSKMDEVIFEEFKGTGNCEIILDRKISDKRVYPAIDISKSGTRKEDMLIDSVCLKKVWLLRRLLSSMGSVEAMEFLRDKLLITKDNNEFFDMMNS</sequence>
<protein>
    <recommendedName>
        <fullName evidence="1">Transcription termination factor Rho 1</fullName>
        <ecNumber evidence="1">3.6.4.-</ecNumber>
    </recommendedName>
    <alternativeName>
        <fullName evidence="1">ATP-dependent helicase Rho 1</fullName>
    </alternativeName>
</protein>
<gene>
    <name evidence="1" type="primary">rho1</name>
    <name type="ordered locus">ECH_0994</name>
</gene>
<proteinExistence type="inferred from homology"/>
<reference key="1">
    <citation type="journal article" date="2006" name="PLoS Genet.">
        <title>Comparative genomics of emerging human ehrlichiosis agents.</title>
        <authorList>
            <person name="Dunning Hotopp J.C."/>
            <person name="Lin M."/>
            <person name="Madupu R."/>
            <person name="Crabtree J."/>
            <person name="Angiuoli S.V."/>
            <person name="Eisen J.A."/>
            <person name="Seshadri R."/>
            <person name="Ren Q."/>
            <person name="Wu M."/>
            <person name="Utterback T.R."/>
            <person name="Smith S."/>
            <person name="Lewis M."/>
            <person name="Khouri H."/>
            <person name="Zhang C."/>
            <person name="Niu H."/>
            <person name="Lin Q."/>
            <person name="Ohashi N."/>
            <person name="Zhi N."/>
            <person name="Nelson W.C."/>
            <person name="Brinkac L.M."/>
            <person name="Dodson R.J."/>
            <person name="Rosovitz M.J."/>
            <person name="Sundaram J.P."/>
            <person name="Daugherty S.C."/>
            <person name="Davidsen T."/>
            <person name="Durkin A.S."/>
            <person name="Gwinn M.L."/>
            <person name="Haft D.H."/>
            <person name="Selengut J.D."/>
            <person name="Sullivan S.A."/>
            <person name="Zafar N."/>
            <person name="Zhou L."/>
            <person name="Benahmed F."/>
            <person name="Forberger H."/>
            <person name="Halpin R."/>
            <person name="Mulligan S."/>
            <person name="Robinson J."/>
            <person name="White O."/>
            <person name="Rikihisa Y."/>
            <person name="Tettelin H."/>
        </authorList>
    </citation>
    <scope>NUCLEOTIDE SEQUENCE [LARGE SCALE GENOMIC DNA]</scope>
    <source>
        <strain>ATCC CRL-10679 / Arkansas</strain>
    </source>
</reference>
<comment type="function">
    <text evidence="1">Facilitates transcription termination by a mechanism that involves Rho binding to the nascent RNA, activation of Rho's RNA-dependent ATPase activity, and release of the mRNA from the DNA template.</text>
</comment>
<comment type="subunit">
    <text evidence="1">Homohexamer. The homohexamer assembles into an open ring structure.</text>
</comment>
<comment type="similarity">
    <text evidence="1">Belongs to the Rho family.</text>
</comment>
<feature type="chain" id="PRO_0000398666" description="Transcription termination factor Rho 1">
    <location>
        <begin position="1"/>
        <end position="422"/>
    </location>
</feature>
<feature type="domain" description="Rho RNA-BD" evidence="2">
    <location>
        <begin position="49"/>
        <end position="124"/>
    </location>
</feature>
<feature type="binding site" evidence="1">
    <location>
        <begin position="173"/>
        <end position="178"/>
    </location>
    <ligand>
        <name>ATP</name>
        <dbReference type="ChEBI" id="CHEBI:30616"/>
    </ligand>
</feature>
<feature type="binding site" evidence="1">
    <location>
        <begin position="185"/>
        <end position="190"/>
    </location>
    <ligand>
        <name>ATP</name>
        <dbReference type="ChEBI" id="CHEBI:30616"/>
    </ligand>
</feature>
<feature type="binding site" evidence="1">
    <location>
        <position position="216"/>
    </location>
    <ligand>
        <name>ATP</name>
        <dbReference type="ChEBI" id="CHEBI:30616"/>
    </ligand>
</feature>
<evidence type="ECO:0000255" key="1">
    <source>
        <dbReference type="HAMAP-Rule" id="MF_01884"/>
    </source>
</evidence>
<evidence type="ECO:0000255" key="2">
    <source>
        <dbReference type="PROSITE-ProRule" id="PRU01203"/>
    </source>
</evidence>